<protein>
    <recommendedName>
        <fullName evidence="1">Large ribosomal subunit protein uL5</fullName>
    </recommendedName>
    <alternativeName>
        <fullName evidence="2">50S ribosomal protein L5</fullName>
    </alternativeName>
</protein>
<feature type="chain" id="PRO_1000052713" description="Large ribosomal subunit protein uL5">
    <location>
        <begin position="1"/>
        <end position="181"/>
    </location>
</feature>
<gene>
    <name evidence="1" type="primary">rplE</name>
    <name type="ordered locus">CHAB381_0096</name>
</gene>
<keyword id="KW-1185">Reference proteome</keyword>
<keyword id="KW-0687">Ribonucleoprotein</keyword>
<keyword id="KW-0689">Ribosomal protein</keyword>
<keyword id="KW-0694">RNA-binding</keyword>
<keyword id="KW-0699">rRNA-binding</keyword>
<keyword id="KW-0820">tRNA-binding</keyword>
<name>RL5_CAMHC</name>
<comment type="function">
    <text evidence="1">This is one of the proteins that bind and probably mediate the attachment of the 5S RNA into the large ribosomal subunit, where it forms part of the central protuberance. In the 70S ribosome it contacts protein S13 of the 30S subunit (bridge B1b), connecting the 2 subunits; this bridge is implicated in subunit movement. Contacts the P site tRNA; the 5S rRNA and some of its associated proteins might help stabilize positioning of ribosome-bound tRNAs.</text>
</comment>
<comment type="subunit">
    <text evidence="1">Part of the 50S ribosomal subunit; part of the 5S rRNA/L5/L18/L25 subcomplex. Contacts the 5S rRNA and the P site tRNA. Forms a bridge to the 30S subunit in the 70S ribosome.</text>
</comment>
<comment type="similarity">
    <text evidence="1">Belongs to the universal ribosomal protein uL5 family.</text>
</comment>
<evidence type="ECO:0000255" key="1">
    <source>
        <dbReference type="HAMAP-Rule" id="MF_01333"/>
    </source>
</evidence>
<evidence type="ECO:0000305" key="2"/>
<organism>
    <name type="scientific">Campylobacter hominis (strain ATCC BAA-381 / DSM 21671 / CCUG 45161 / LMG 19568 / NCTC 13146 / CH001A)</name>
    <dbReference type="NCBI Taxonomy" id="360107"/>
    <lineage>
        <taxon>Bacteria</taxon>
        <taxon>Pseudomonadati</taxon>
        <taxon>Campylobacterota</taxon>
        <taxon>Epsilonproteobacteria</taxon>
        <taxon>Campylobacterales</taxon>
        <taxon>Campylobacteraceae</taxon>
        <taxon>Campylobacter</taxon>
    </lineage>
</organism>
<dbReference type="EMBL" id="CP000776">
    <property type="protein sequence ID" value="ABS51103.1"/>
    <property type="molecule type" value="Genomic_DNA"/>
</dbReference>
<dbReference type="RefSeq" id="WP_011991556.1">
    <property type="nucleotide sequence ID" value="NC_009714.1"/>
</dbReference>
<dbReference type="SMR" id="A7HZL8"/>
<dbReference type="STRING" id="360107.CHAB381_0096"/>
<dbReference type="KEGG" id="cha:CHAB381_0096"/>
<dbReference type="eggNOG" id="COG0094">
    <property type="taxonomic scope" value="Bacteria"/>
</dbReference>
<dbReference type="HOGENOM" id="CLU_061015_2_1_7"/>
<dbReference type="OrthoDB" id="9806626at2"/>
<dbReference type="Proteomes" id="UP000002407">
    <property type="component" value="Chromosome"/>
</dbReference>
<dbReference type="GO" id="GO:1990904">
    <property type="term" value="C:ribonucleoprotein complex"/>
    <property type="evidence" value="ECO:0007669"/>
    <property type="project" value="UniProtKB-KW"/>
</dbReference>
<dbReference type="GO" id="GO:0005840">
    <property type="term" value="C:ribosome"/>
    <property type="evidence" value="ECO:0007669"/>
    <property type="project" value="UniProtKB-KW"/>
</dbReference>
<dbReference type="GO" id="GO:0019843">
    <property type="term" value="F:rRNA binding"/>
    <property type="evidence" value="ECO:0007669"/>
    <property type="project" value="UniProtKB-UniRule"/>
</dbReference>
<dbReference type="GO" id="GO:0003735">
    <property type="term" value="F:structural constituent of ribosome"/>
    <property type="evidence" value="ECO:0007669"/>
    <property type="project" value="InterPro"/>
</dbReference>
<dbReference type="GO" id="GO:0000049">
    <property type="term" value="F:tRNA binding"/>
    <property type="evidence" value="ECO:0007669"/>
    <property type="project" value="UniProtKB-UniRule"/>
</dbReference>
<dbReference type="GO" id="GO:0006412">
    <property type="term" value="P:translation"/>
    <property type="evidence" value="ECO:0007669"/>
    <property type="project" value="UniProtKB-UniRule"/>
</dbReference>
<dbReference type="FunFam" id="3.30.1440.10:FF:000001">
    <property type="entry name" value="50S ribosomal protein L5"/>
    <property type="match status" value="1"/>
</dbReference>
<dbReference type="Gene3D" id="3.30.1440.10">
    <property type="match status" value="1"/>
</dbReference>
<dbReference type="HAMAP" id="MF_01333_B">
    <property type="entry name" value="Ribosomal_uL5_B"/>
    <property type="match status" value="1"/>
</dbReference>
<dbReference type="InterPro" id="IPR002132">
    <property type="entry name" value="Ribosomal_uL5"/>
</dbReference>
<dbReference type="InterPro" id="IPR020930">
    <property type="entry name" value="Ribosomal_uL5_bac-type"/>
</dbReference>
<dbReference type="InterPro" id="IPR031309">
    <property type="entry name" value="Ribosomal_uL5_C"/>
</dbReference>
<dbReference type="InterPro" id="IPR020929">
    <property type="entry name" value="Ribosomal_uL5_CS"/>
</dbReference>
<dbReference type="InterPro" id="IPR022803">
    <property type="entry name" value="Ribosomal_uL5_dom_sf"/>
</dbReference>
<dbReference type="InterPro" id="IPR031310">
    <property type="entry name" value="Ribosomal_uL5_N"/>
</dbReference>
<dbReference type="NCBIfam" id="NF000585">
    <property type="entry name" value="PRK00010.1"/>
    <property type="match status" value="1"/>
</dbReference>
<dbReference type="PANTHER" id="PTHR11994">
    <property type="entry name" value="60S RIBOSOMAL PROTEIN L11-RELATED"/>
    <property type="match status" value="1"/>
</dbReference>
<dbReference type="Pfam" id="PF00281">
    <property type="entry name" value="Ribosomal_L5"/>
    <property type="match status" value="1"/>
</dbReference>
<dbReference type="Pfam" id="PF00673">
    <property type="entry name" value="Ribosomal_L5_C"/>
    <property type="match status" value="1"/>
</dbReference>
<dbReference type="PIRSF" id="PIRSF002161">
    <property type="entry name" value="Ribosomal_L5"/>
    <property type="match status" value="1"/>
</dbReference>
<dbReference type="SUPFAM" id="SSF55282">
    <property type="entry name" value="RL5-like"/>
    <property type="match status" value="1"/>
</dbReference>
<dbReference type="PROSITE" id="PS00358">
    <property type="entry name" value="RIBOSOMAL_L5"/>
    <property type="match status" value="1"/>
</dbReference>
<sequence>MNRLKQLYENSIKPAIVKEFDIKNSMLIPKLDKIVISVGVGESSKDEKILQNMADTISLIAGQKAVITNAKKSIAGFKVREGFPVGIKVTLRKDNMFVFLDKLVSIALPRVKDFRGLSRDGFDGRGNYNFGLDEQLMFPEVEYDKILKTHGMNITIVTTANSDKEAFKLLELFGVPFAKGK</sequence>
<reference key="1">
    <citation type="submission" date="2007-07" db="EMBL/GenBank/DDBJ databases">
        <title>Complete genome sequence of Campylobacter hominis ATCC BAA-381, a commensal isolated from the human gastrointestinal tract.</title>
        <authorList>
            <person name="Fouts D.E."/>
            <person name="Mongodin E.F."/>
            <person name="Puiu D."/>
            <person name="Sebastian Y."/>
            <person name="Miller W.G."/>
            <person name="Mandrell R.E."/>
            <person name="Nelson K.E."/>
        </authorList>
    </citation>
    <scope>NUCLEOTIDE SEQUENCE [LARGE SCALE GENOMIC DNA]</scope>
    <source>
        <strain>ATCC BAA-381 / DSM 21671 / CCUG 45161 / LMG 19568 / NCTC 13146 / CH001A</strain>
    </source>
</reference>
<accession>A7HZL8</accession>
<proteinExistence type="inferred from homology"/>